<accession>Q31XY3</accession>
<dbReference type="EC" id="6.3.5.2" evidence="1"/>
<dbReference type="EMBL" id="CP000036">
    <property type="protein sequence ID" value="ABB67075.1"/>
    <property type="molecule type" value="Genomic_DNA"/>
</dbReference>
<dbReference type="RefSeq" id="WP_000138274.1">
    <property type="nucleotide sequence ID" value="NC_007613.1"/>
</dbReference>
<dbReference type="SMR" id="Q31XY3"/>
<dbReference type="KEGG" id="sbo:SBO_2531"/>
<dbReference type="HOGENOM" id="CLU_014340_0_5_6"/>
<dbReference type="UniPathway" id="UPA00189">
    <property type="reaction ID" value="UER00296"/>
</dbReference>
<dbReference type="Proteomes" id="UP000007067">
    <property type="component" value="Chromosome"/>
</dbReference>
<dbReference type="GO" id="GO:0005829">
    <property type="term" value="C:cytosol"/>
    <property type="evidence" value="ECO:0007669"/>
    <property type="project" value="TreeGrafter"/>
</dbReference>
<dbReference type="GO" id="GO:0005524">
    <property type="term" value="F:ATP binding"/>
    <property type="evidence" value="ECO:0007669"/>
    <property type="project" value="UniProtKB-UniRule"/>
</dbReference>
<dbReference type="GO" id="GO:0003921">
    <property type="term" value="F:GMP synthase activity"/>
    <property type="evidence" value="ECO:0007669"/>
    <property type="project" value="InterPro"/>
</dbReference>
<dbReference type="CDD" id="cd01742">
    <property type="entry name" value="GATase1_GMP_Synthase"/>
    <property type="match status" value="1"/>
</dbReference>
<dbReference type="CDD" id="cd01997">
    <property type="entry name" value="GMP_synthase_C"/>
    <property type="match status" value="1"/>
</dbReference>
<dbReference type="FunFam" id="3.30.300.10:FF:000002">
    <property type="entry name" value="GMP synthase [glutamine-hydrolyzing]"/>
    <property type="match status" value="1"/>
</dbReference>
<dbReference type="FunFam" id="3.40.50.620:FF:000001">
    <property type="entry name" value="GMP synthase [glutamine-hydrolyzing]"/>
    <property type="match status" value="1"/>
</dbReference>
<dbReference type="FunFam" id="3.40.50.880:FF:000001">
    <property type="entry name" value="GMP synthase [glutamine-hydrolyzing]"/>
    <property type="match status" value="1"/>
</dbReference>
<dbReference type="Gene3D" id="3.30.300.10">
    <property type="match status" value="1"/>
</dbReference>
<dbReference type="Gene3D" id="3.40.50.880">
    <property type="match status" value="1"/>
</dbReference>
<dbReference type="Gene3D" id="3.40.50.620">
    <property type="entry name" value="HUPs"/>
    <property type="match status" value="1"/>
</dbReference>
<dbReference type="HAMAP" id="MF_00344">
    <property type="entry name" value="GMP_synthase"/>
    <property type="match status" value="1"/>
</dbReference>
<dbReference type="InterPro" id="IPR029062">
    <property type="entry name" value="Class_I_gatase-like"/>
</dbReference>
<dbReference type="InterPro" id="IPR017926">
    <property type="entry name" value="GATASE"/>
</dbReference>
<dbReference type="InterPro" id="IPR001674">
    <property type="entry name" value="GMP_synth_C"/>
</dbReference>
<dbReference type="InterPro" id="IPR004739">
    <property type="entry name" value="GMP_synth_GATase"/>
</dbReference>
<dbReference type="InterPro" id="IPR022955">
    <property type="entry name" value="GMP_synthase"/>
</dbReference>
<dbReference type="InterPro" id="IPR025777">
    <property type="entry name" value="GMPS_ATP_PPase_dom"/>
</dbReference>
<dbReference type="InterPro" id="IPR022310">
    <property type="entry name" value="NAD/GMP_synthase"/>
</dbReference>
<dbReference type="InterPro" id="IPR014729">
    <property type="entry name" value="Rossmann-like_a/b/a_fold"/>
</dbReference>
<dbReference type="NCBIfam" id="TIGR00884">
    <property type="entry name" value="guaA_Cterm"/>
    <property type="match status" value="1"/>
</dbReference>
<dbReference type="NCBIfam" id="TIGR00888">
    <property type="entry name" value="guaA_Nterm"/>
    <property type="match status" value="1"/>
</dbReference>
<dbReference type="NCBIfam" id="NF000848">
    <property type="entry name" value="PRK00074.1"/>
    <property type="match status" value="1"/>
</dbReference>
<dbReference type="PANTHER" id="PTHR11922:SF2">
    <property type="entry name" value="GMP SYNTHASE [GLUTAMINE-HYDROLYZING]"/>
    <property type="match status" value="1"/>
</dbReference>
<dbReference type="PANTHER" id="PTHR11922">
    <property type="entry name" value="GMP SYNTHASE-RELATED"/>
    <property type="match status" value="1"/>
</dbReference>
<dbReference type="Pfam" id="PF00117">
    <property type="entry name" value="GATase"/>
    <property type="match status" value="1"/>
</dbReference>
<dbReference type="Pfam" id="PF00958">
    <property type="entry name" value="GMP_synt_C"/>
    <property type="match status" value="1"/>
</dbReference>
<dbReference type="Pfam" id="PF02540">
    <property type="entry name" value="NAD_synthase"/>
    <property type="match status" value="1"/>
</dbReference>
<dbReference type="PRINTS" id="PR00097">
    <property type="entry name" value="ANTSNTHASEII"/>
</dbReference>
<dbReference type="PRINTS" id="PR00099">
    <property type="entry name" value="CPSGATASE"/>
</dbReference>
<dbReference type="PRINTS" id="PR00096">
    <property type="entry name" value="GATASE"/>
</dbReference>
<dbReference type="SUPFAM" id="SSF52402">
    <property type="entry name" value="Adenine nucleotide alpha hydrolases-like"/>
    <property type="match status" value="1"/>
</dbReference>
<dbReference type="SUPFAM" id="SSF52317">
    <property type="entry name" value="Class I glutamine amidotransferase-like"/>
    <property type="match status" value="1"/>
</dbReference>
<dbReference type="SUPFAM" id="SSF54810">
    <property type="entry name" value="GMP synthetase C-terminal dimerisation domain"/>
    <property type="match status" value="1"/>
</dbReference>
<dbReference type="PROSITE" id="PS51273">
    <property type="entry name" value="GATASE_TYPE_1"/>
    <property type="match status" value="1"/>
</dbReference>
<dbReference type="PROSITE" id="PS51553">
    <property type="entry name" value="GMPS_ATP_PPASE"/>
    <property type="match status" value="1"/>
</dbReference>
<comment type="function">
    <text evidence="1">Catalyzes the synthesis of GMP from XMP.</text>
</comment>
<comment type="catalytic activity">
    <reaction evidence="1">
        <text>XMP + L-glutamine + ATP + H2O = GMP + L-glutamate + AMP + diphosphate + 2 H(+)</text>
        <dbReference type="Rhea" id="RHEA:11680"/>
        <dbReference type="ChEBI" id="CHEBI:15377"/>
        <dbReference type="ChEBI" id="CHEBI:15378"/>
        <dbReference type="ChEBI" id="CHEBI:29985"/>
        <dbReference type="ChEBI" id="CHEBI:30616"/>
        <dbReference type="ChEBI" id="CHEBI:33019"/>
        <dbReference type="ChEBI" id="CHEBI:57464"/>
        <dbReference type="ChEBI" id="CHEBI:58115"/>
        <dbReference type="ChEBI" id="CHEBI:58359"/>
        <dbReference type="ChEBI" id="CHEBI:456215"/>
        <dbReference type="EC" id="6.3.5.2"/>
    </reaction>
</comment>
<comment type="pathway">
    <text evidence="1">Purine metabolism; GMP biosynthesis; GMP from XMP (L-Gln route): step 1/1.</text>
</comment>
<comment type="subunit">
    <text evidence="1">Homodimer.</text>
</comment>
<keyword id="KW-0067">ATP-binding</keyword>
<keyword id="KW-0315">Glutamine amidotransferase</keyword>
<keyword id="KW-0332">GMP biosynthesis</keyword>
<keyword id="KW-0436">Ligase</keyword>
<keyword id="KW-0547">Nucleotide-binding</keyword>
<keyword id="KW-0658">Purine biosynthesis</keyword>
<organism>
    <name type="scientific">Shigella boydii serotype 4 (strain Sb227)</name>
    <dbReference type="NCBI Taxonomy" id="300268"/>
    <lineage>
        <taxon>Bacteria</taxon>
        <taxon>Pseudomonadati</taxon>
        <taxon>Pseudomonadota</taxon>
        <taxon>Gammaproteobacteria</taxon>
        <taxon>Enterobacterales</taxon>
        <taxon>Enterobacteriaceae</taxon>
        <taxon>Shigella</taxon>
    </lineage>
</organism>
<sequence length="525" mass="58646">MTENIHKHRILILDFGSQYTQLVARRVRELGVYCELWAWDVTEAQIRDFNPSGIILSGGPESTTEENSPRAPQYVFEAGVPVFGVCYGMQTMAMQLGGHVEASNEREFGYAQVEVVNDSALVRGIEDALTADGKPLLDVWMSHGDKVTAIPSDFVTVASTESCPFAIMANEEKRFYGVQFHPEVTHTRQGMHMLERFVRDICQCEALWTPAKIIDDAVARIREQVGDDKVILGLSGGVDSSVTAMLLHRAIGKNLTCVFVDNGLLRLNEAEQVLDMFGDHFGLNIVHVPAEDRFLSALAGENDPEAKRKIIGRVFVEVFDEEALKLEDVKWLAQGTIYPDVIESAASATGKAHVIKSHHNVGGLPKEMKMGLVEPLKELFKDEVRKIGLELGLPYDMLYRHPFPGPGLGVRVLGEVKKEYCDLLRRADAIFIEELRKADLYDKVSQAFTVFLPVRSVGVMGDGRKYDWVVSLRAVETIDFMTAHWAHLPYDFLGRVSNRIINEVNGISRVVYDISGKPPATIEWE</sequence>
<reference key="1">
    <citation type="journal article" date="2005" name="Nucleic Acids Res.">
        <title>Genome dynamics and diversity of Shigella species, the etiologic agents of bacillary dysentery.</title>
        <authorList>
            <person name="Yang F."/>
            <person name="Yang J."/>
            <person name="Zhang X."/>
            <person name="Chen L."/>
            <person name="Jiang Y."/>
            <person name="Yan Y."/>
            <person name="Tang X."/>
            <person name="Wang J."/>
            <person name="Xiong Z."/>
            <person name="Dong J."/>
            <person name="Xue Y."/>
            <person name="Zhu Y."/>
            <person name="Xu X."/>
            <person name="Sun L."/>
            <person name="Chen S."/>
            <person name="Nie H."/>
            <person name="Peng J."/>
            <person name="Xu J."/>
            <person name="Wang Y."/>
            <person name="Yuan Z."/>
            <person name="Wen Y."/>
            <person name="Yao Z."/>
            <person name="Shen Y."/>
            <person name="Qiang B."/>
            <person name="Hou Y."/>
            <person name="Yu J."/>
            <person name="Jin Q."/>
        </authorList>
    </citation>
    <scope>NUCLEOTIDE SEQUENCE [LARGE SCALE GENOMIC DNA]</scope>
    <source>
        <strain>Sb227</strain>
    </source>
</reference>
<evidence type="ECO:0000255" key="1">
    <source>
        <dbReference type="HAMAP-Rule" id="MF_00344"/>
    </source>
</evidence>
<proteinExistence type="inferred from homology"/>
<gene>
    <name evidence="1" type="primary">guaA</name>
    <name type="ordered locus">SBO_2531</name>
</gene>
<feature type="chain" id="PRO_0000229467" description="GMP synthase [glutamine-hydrolyzing]">
    <location>
        <begin position="1"/>
        <end position="525"/>
    </location>
</feature>
<feature type="domain" description="Glutamine amidotransferase type-1" evidence="1">
    <location>
        <begin position="9"/>
        <end position="207"/>
    </location>
</feature>
<feature type="domain" description="GMPS ATP-PPase" evidence="1">
    <location>
        <begin position="208"/>
        <end position="400"/>
    </location>
</feature>
<feature type="active site" description="Nucleophile" evidence="1">
    <location>
        <position position="86"/>
    </location>
</feature>
<feature type="active site" evidence="1">
    <location>
        <position position="181"/>
    </location>
</feature>
<feature type="active site" evidence="1">
    <location>
        <position position="183"/>
    </location>
</feature>
<feature type="binding site" evidence="1">
    <location>
        <begin position="235"/>
        <end position="241"/>
    </location>
    <ligand>
        <name>ATP</name>
        <dbReference type="ChEBI" id="CHEBI:30616"/>
    </ligand>
</feature>
<protein>
    <recommendedName>
        <fullName evidence="1">GMP synthase [glutamine-hydrolyzing]</fullName>
        <ecNumber evidence="1">6.3.5.2</ecNumber>
    </recommendedName>
    <alternativeName>
        <fullName evidence="1">GMP synthetase</fullName>
    </alternativeName>
    <alternativeName>
        <fullName evidence="1">Glutamine amidotransferase</fullName>
    </alternativeName>
</protein>
<name>GUAA_SHIBS</name>